<comment type="catalytic activity">
    <reaction evidence="1">
        <text>sulfate + ATP + H(+) = adenosine 5'-phosphosulfate + diphosphate</text>
        <dbReference type="Rhea" id="RHEA:18133"/>
        <dbReference type="ChEBI" id="CHEBI:15378"/>
        <dbReference type="ChEBI" id="CHEBI:16189"/>
        <dbReference type="ChEBI" id="CHEBI:30616"/>
        <dbReference type="ChEBI" id="CHEBI:33019"/>
        <dbReference type="ChEBI" id="CHEBI:58243"/>
        <dbReference type="EC" id="2.7.7.4"/>
    </reaction>
</comment>
<comment type="pathway">
    <text evidence="1">Sulfur metabolism; hydrogen sulfide biosynthesis; sulfite from sulfate: step 1/3.</text>
</comment>
<comment type="similarity">
    <text evidence="1">Belongs to the sulfate adenylyltransferase family.</text>
</comment>
<sequence length="383" mass="43697">MIKPHGGKLVNRIVEGAKREELIKKAGEMPRIMLNRDELTAVDNIATGLFSPLEGFLTSEDYNRVVEEMRLADGTVWSIPEVLGVTREEADNLKEGQDVGLYFEEDDELYAILHLEEKYTCDPEREAELVYGTTEEEHPGVKNVYKRDEILLGGKISLINRLKYDDFNNYRLTPAETREKIKEKGWQTVVGFQTRNPIHRAHEYLQKCALETVDGLFLSPLVGRTKASDIPADIRIKSYEVVLDKFYPRDRTMMVVFPAAMHYAGPREAIFHALCRKNYGCTHFIVGRDHAGVGDYYGTYDAQKIFDEFDPEEIGITPLKFEYSFYCKKCGGMASGKTCPHSADDHIFLSGTRVRKLLREGKKPPKEMTRPEVAEVLIQGMQQ</sequence>
<gene>
    <name evidence="1" type="primary">sat</name>
    <name type="ordered locus">Hore_22660</name>
</gene>
<accession>B8D0S5</accession>
<protein>
    <recommendedName>
        <fullName evidence="1">Sulfate adenylyltransferase</fullName>
        <ecNumber evidence="1">2.7.7.4</ecNumber>
    </recommendedName>
    <alternativeName>
        <fullName evidence="1">ATP-sulfurylase</fullName>
    </alternativeName>
    <alternativeName>
        <fullName evidence="1">Sulfate adenylate transferase</fullName>
        <shortName evidence="1">SAT</shortName>
    </alternativeName>
</protein>
<dbReference type="EC" id="2.7.7.4" evidence="1"/>
<dbReference type="EMBL" id="CP001098">
    <property type="protein sequence ID" value="ACL71011.1"/>
    <property type="molecule type" value="Genomic_DNA"/>
</dbReference>
<dbReference type="RefSeq" id="WP_015923980.1">
    <property type="nucleotide sequence ID" value="NC_011899.1"/>
</dbReference>
<dbReference type="SMR" id="B8D0S5"/>
<dbReference type="STRING" id="373903.Hore_22660"/>
<dbReference type="KEGG" id="hor:Hore_22660"/>
<dbReference type="eggNOG" id="COG2046">
    <property type="taxonomic scope" value="Bacteria"/>
</dbReference>
<dbReference type="HOGENOM" id="CLU_022950_1_1_9"/>
<dbReference type="OrthoDB" id="9804504at2"/>
<dbReference type="UniPathway" id="UPA00140">
    <property type="reaction ID" value="UER00204"/>
</dbReference>
<dbReference type="Proteomes" id="UP000000719">
    <property type="component" value="Chromosome"/>
</dbReference>
<dbReference type="GO" id="GO:0005524">
    <property type="term" value="F:ATP binding"/>
    <property type="evidence" value="ECO:0007669"/>
    <property type="project" value="UniProtKB-KW"/>
</dbReference>
<dbReference type="GO" id="GO:0004781">
    <property type="term" value="F:sulfate adenylyltransferase (ATP) activity"/>
    <property type="evidence" value="ECO:0007669"/>
    <property type="project" value="UniProtKB-UniRule"/>
</dbReference>
<dbReference type="GO" id="GO:0070814">
    <property type="term" value="P:hydrogen sulfide biosynthetic process"/>
    <property type="evidence" value="ECO:0007669"/>
    <property type="project" value="UniProtKB-UniRule"/>
</dbReference>
<dbReference type="GO" id="GO:0000103">
    <property type="term" value="P:sulfate assimilation"/>
    <property type="evidence" value="ECO:0007669"/>
    <property type="project" value="UniProtKB-UniRule"/>
</dbReference>
<dbReference type="CDD" id="cd00517">
    <property type="entry name" value="ATPS"/>
    <property type="match status" value="1"/>
</dbReference>
<dbReference type="Gene3D" id="3.40.50.620">
    <property type="entry name" value="HUPs"/>
    <property type="match status" value="1"/>
</dbReference>
<dbReference type="Gene3D" id="3.10.400.10">
    <property type="entry name" value="Sulfate adenylyltransferase"/>
    <property type="match status" value="1"/>
</dbReference>
<dbReference type="HAMAP" id="MF_00066">
    <property type="entry name" value="Sulf_adenylyltr"/>
    <property type="match status" value="1"/>
</dbReference>
<dbReference type="InterPro" id="IPR025980">
    <property type="entry name" value="ATP-Sase_PUA-like_dom"/>
</dbReference>
<dbReference type="InterPro" id="IPR015947">
    <property type="entry name" value="PUA-like_sf"/>
</dbReference>
<dbReference type="InterPro" id="IPR014729">
    <property type="entry name" value="Rossmann-like_a/b/a_fold"/>
</dbReference>
<dbReference type="InterPro" id="IPR020792">
    <property type="entry name" value="SO4_adenylyltransferase_pro"/>
</dbReference>
<dbReference type="InterPro" id="IPR024951">
    <property type="entry name" value="Sulfurylase_cat_dom"/>
</dbReference>
<dbReference type="InterPro" id="IPR002650">
    <property type="entry name" value="Sulphate_adenylyltransferase"/>
</dbReference>
<dbReference type="NCBIfam" id="NF003166">
    <property type="entry name" value="PRK04149.1"/>
    <property type="match status" value="1"/>
</dbReference>
<dbReference type="NCBIfam" id="TIGR00339">
    <property type="entry name" value="sopT"/>
    <property type="match status" value="1"/>
</dbReference>
<dbReference type="PANTHER" id="PTHR43509">
    <property type="match status" value="1"/>
</dbReference>
<dbReference type="PANTHER" id="PTHR43509:SF1">
    <property type="entry name" value="SULFATE ADENYLYLTRANSFERASE"/>
    <property type="match status" value="1"/>
</dbReference>
<dbReference type="Pfam" id="PF01747">
    <property type="entry name" value="ATP-sulfurylase"/>
    <property type="match status" value="1"/>
</dbReference>
<dbReference type="Pfam" id="PF14306">
    <property type="entry name" value="PUA_2"/>
    <property type="match status" value="1"/>
</dbReference>
<dbReference type="SUPFAM" id="SSF52374">
    <property type="entry name" value="Nucleotidylyl transferase"/>
    <property type="match status" value="1"/>
</dbReference>
<dbReference type="SUPFAM" id="SSF88697">
    <property type="entry name" value="PUA domain-like"/>
    <property type="match status" value="1"/>
</dbReference>
<proteinExistence type="inferred from homology"/>
<name>SAT_HALOH</name>
<feature type="chain" id="PRO_1000117967" description="Sulfate adenylyltransferase">
    <location>
        <begin position="1"/>
        <end position="383"/>
    </location>
</feature>
<reference key="1">
    <citation type="journal article" date="2009" name="PLoS ONE">
        <title>Genome analysis of the anaerobic thermohalophilic bacterium Halothermothrix orenii.</title>
        <authorList>
            <person name="Mavromatis K."/>
            <person name="Ivanova N."/>
            <person name="Anderson I."/>
            <person name="Lykidis A."/>
            <person name="Hooper S.D."/>
            <person name="Sun H."/>
            <person name="Kunin V."/>
            <person name="Lapidus A."/>
            <person name="Hugenholtz P."/>
            <person name="Patel B."/>
            <person name="Kyrpides N.C."/>
        </authorList>
    </citation>
    <scope>NUCLEOTIDE SEQUENCE [LARGE SCALE GENOMIC DNA]</scope>
    <source>
        <strain>H 168 / OCM 544 / DSM 9562</strain>
    </source>
</reference>
<keyword id="KW-0067">ATP-binding</keyword>
<keyword id="KW-0547">Nucleotide-binding</keyword>
<keyword id="KW-0548">Nucleotidyltransferase</keyword>
<keyword id="KW-1185">Reference proteome</keyword>
<keyword id="KW-0808">Transferase</keyword>
<organism>
    <name type="scientific">Halothermothrix orenii (strain H 168 / OCM 544 / DSM 9562)</name>
    <dbReference type="NCBI Taxonomy" id="373903"/>
    <lineage>
        <taxon>Bacteria</taxon>
        <taxon>Bacillati</taxon>
        <taxon>Bacillota</taxon>
        <taxon>Clostridia</taxon>
        <taxon>Halanaerobiales</taxon>
        <taxon>Halothermotrichaceae</taxon>
        <taxon>Halothermothrix</taxon>
    </lineage>
</organism>
<evidence type="ECO:0000255" key="1">
    <source>
        <dbReference type="HAMAP-Rule" id="MF_00066"/>
    </source>
</evidence>